<dbReference type="EC" id="2.7.7.6" evidence="1"/>
<dbReference type="EMBL" id="CP000390">
    <property type="protein sequence ID" value="ABG63211.1"/>
    <property type="molecule type" value="Genomic_DNA"/>
</dbReference>
<dbReference type="SMR" id="Q11HB4"/>
<dbReference type="STRING" id="266779.Meso_1818"/>
<dbReference type="KEGG" id="mes:Meso_1818"/>
<dbReference type="eggNOG" id="COG0086">
    <property type="taxonomic scope" value="Bacteria"/>
</dbReference>
<dbReference type="HOGENOM" id="CLU_000524_3_1_5"/>
<dbReference type="OrthoDB" id="9815296at2"/>
<dbReference type="GO" id="GO:0000428">
    <property type="term" value="C:DNA-directed RNA polymerase complex"/>
    <property type="evidence" value="ECO:0007669"/>
    <property type="project" value="UniProtKB-KW"/>
</dbReference>
<dbReference type="GO" id="GO:0003677">
    <property type="term" value="F:DNA binding"/>
    <property type="evidence" value="ECO:0007669"/>
    <property type="project" value="UniProtKB-UniRule"/>
</dbReference>
<dbReference type="GO" id="GO:0003899">
    <property type="term" value="F:DNA-directed RNA polymerase activity"/>
    <property type="evidence" value="ECO:0007669"/>
    <property type="project" value="UniProtKB-UniRule"/>
</dbReference>
<dbReference type="GO" id="GO:0000287">
    <property type="term" value="F:magnesium ion binding"/>
    <property type="evidence" value="ECO:0007669"/>
    <property type="project" value="UniProtKB-UniRule"/>
</dbReference>
<dbReference type="GO" id="GO:0008270">
    <property type="term" value="F:zinc ion binding"/>
    <property type="evidence" value="ECO:0007669"/>
    <property type="project" value="UniProtKB-UniRule"/>
</dbReference>
<dbReference type="GO" id="GO:0006351">
    <property type="term" value="P:DNA-templated transcription"/>
    <property type="evidence" value="ECO:0007669"/>
    <property type="project" value="UniProtKB-UniRule"/>
</dbReference>
<dbReference type="CDD" id="cd02655">
    <property type="entry name" value="RNAP_beta'_C"/>
    <property type="match status" value="1"/>
</dbReference>
<dbReference type="CDD" id="cd01609">
    <property type="entry name" value="RNAP_beta'_N"/>
    <property type="match status" value="1"/>
</dbReference>
<dbReference type="FunFam" id="1.10.132.30:FF:000003">
    <property type="entry name" value="DNA-directed RNA polymerase subunit beta"/>
    <property type="match status" value="1"/>
</dbReference>
<dbReference type="FunFam" id="4.10.860.120:FF:000001">
    <property type="entry name" value="DNA-directed RNA polymerase subunit beta"/>
    <property type="match status" value="1"/>
</dbReference>
<dbReference type="Gene3D" id="1.10.132.30">
    <property type="match status" value="1"/>
</dbReference>
<dbReference type="Gene3D" id="1.10.150.390">
    <property type="match status" value="1"/>
</dbReference>
<dbReference type="Gene3D" id="1.10.1790.20">
    <property type="match status" value="1"/>
</dbReference>
<dbReference type="Gene3D" id="1.10.40.90">
    <property type="match status" value="1"/>
</dbReference>
<dbReference type="Gene3D" id="2.40.40.20">
    <property type="match status" value="1"/>
</dbReference>
<dbReference type="Gene3D" id="2.40.50.100">
    <property type="match status" value="3"/>
</dbReference>
<dbReference type="Gene3D" id="4.10.860.120">
    <property type="entry name" value="RNA polymerase II, clamp domain"/>
    <property type="match status" value="1"/>
</dbReference>
<dbReference type="Gene3D" id="1.10.274.100">
    <property type="entry name" value="RNA polymerase Rpb1, domain 3"/>
    <property type="match status" value="2"/>
</dbReference>
<dbReference type="HAMAP" id="MF_01322">
    <property type="entry name" value="RNApol_bact_RpoC"/>
    <property type="match status" value="1"/>
</dbReference>
<dbReference type="InterPro" id="IPR045867">
    <property type="entry name" value="DNA-dir_RpoC_beta_prime"/>
</dbReference>
<dbReference type="InterPro" id="IPR012754">
    <property type="entry name" value="DNA-dir_RpoC_beta_prime_bact"/>
</dbReference>
<dbReference type="InterPro" id="IPR000722">
    <property type="entry name" value="RNA_pol_asu"/>
</dbReference>
<dbReference type="InterPro" id="IPR006592">
    <property type="entry name" value="RNA_pol_N"/>
</dbReference>
<dbReference type="InterPro" id="IPR007080">
    <property type="entry name" value="RNA_pol_Rpb1_1"/>
</dbReference>
<dbReference type="InterPro" id="IPR007066">
    <property type="entry name" value="RNA_pol_Rpb1_3"/>
</dbReference>
<dbReference type="InterPro" id="IPR042102">
    <property type="entry name" value="RNA_pol_Rpb1_3_sf"/>
</dbReference>
<dbReference type="InterPro" id="IPR007083">
    <property type="entry name" value="RNA_pol_Rpb1_4"/>
</dbReference>
<dbReference type="InterPro" id="IPR007081">
    <property type="entry name" value="RNA_pol_Rpb1_5"/>
</dbReference>
<dbReference type="InterPro" id="IPR044893">
    <property type="entry name" value="RNA_pol_Rpb1_clamp_domain"/>
</dbReference>
<dbReference type="InterPro" id="IPR038120">
    <property type="entry name" value="Rpb1_funnel_sf"/>
</dbReference>
<dbReference type="NCBIfam" id="TIGR02386">
    <property type="entry name" value="rpoC_TIGR"/>
    <property type="match status" value="1"/>
</dbReference>
<dbReference type="PANTHER" id="PTHR19376">
    <property type="entry name" value="DNA-DIRECTED RNA POLYMERASE"/>
    <property type="match status" value="1"/>
</dbReference>
<dbReference type="PANTHER" id="PTHR19376:SF54">
    <property type="entry name" value="DNA-DIRECTED RNA POLYMERASE SUBUNIT BETA"/>
    <property type="match status" value="1"/>
</dbReference>
<dbReference type="Pfam" id="PF04997">
    <property type="entry name" value="RNA_pol_Rpb1_1"/>
    <property type="match status" value="1"/>
</dbReference>
<dbReference type="Pfam" id="PF00623">
    <property type="entry name" value="RNA_pol_Rpb1_2"/>
    <property type="match status" value="1"/>
</dbReference>
<dbReference type="Pfam" id="PF04983">
    <property type="entry name" value="RNA_pol_Rpb1_3"/>
    <property type="match status" value="1"/>
</dbReference>
<dbReference type="Pfam" id="PF05000">
    <property type="entry name" value="RNA_pol_Rpb1_4"/>
    <property type="match status" value="1"/>
</dbReference>
<dbReference type="Pfam" id="PF04998">
    <property type="entry name" value="RNA_pol_Rpb1_5"/>
    <property type="match status" value="1"/>
</dbReference>
<dbReference type="SMART" id="SM00663">
    <property type="entry name" value="RPOLA_N"/>
    <property type="match status" value="1"/>
</dbReference>
<dbReference type="SUPFAM" id="SSF64484">
    <property type="entry name" value="beta and beta-prime subunits of DNA dependent RNA-polymerase"/>
    <property type="match status" value="1"/>
</dbReference>
<accession>Q11HB4</accession>
<keyword id="KW-0240">DNA-directed RNA polymerase</keyword>
<keyword id="KW-0460">Magnesium</keyword>
<keyword id="KW-0479">Metal-binding</keyword>
<keyword id="KW-0548">Nucleotidyltransferase</keyword>
<keyword id="KW-0804">Transcription</keyword>
<keyword id="KW-0808">Transferase</keyword>
<keyword id="KW-0862">Zinc</keyword>
<evidence type="ECO:0000255" key="1">
    <source>
        <dbReference type="HAMAP-Rule" id="MF_01322"/>
    </source>
</evidence>
<protein>
    <recommendedName>
        <fullName evidence="1">DNA-directed RNA polymerase subunit beta'</fullName>
        <shortName evidence="1">RNAP subunit beta'</shortName>
        <ecNumber evidence="1">2.7.7.6</ecNumber>
    </recommendedName>
    <alternativeName>
        <fullName evidence="1">RNA polymerase subunit beta'</fullName>
    </alternativeName>
    <alternativeName>
        <fullName evidence="1">Transcriptase subunit beta'</fullName>
    </alternativeName>
</protein>
<organism>
    <name type="scientific">Chelativorans sp. (strain BNC1)</name>
    <dbReference type="NCBI Taxonomy" id="266779"/>
    <lineage>
        <taxon>Bacteria</taxon>
        <taxon>Pseudomonadati</taxon>
        <taxon>Pseudomonadota</taxon>
        <taxon>Alphaproteobacteria</taxon>
        <taxon>Hyphomicrobiales</taxon>
        <taxon>Phyllobacteriaceae</taxon>
        <taxon>Chelativorans</taxon>
    </lineage>
</organism>
<name>RPOC_CHESB</name>
<sequence>MNQEVMNLFNPQAPAQTFDSIRISLASPEKILSWSYGEIKKPETINYRTFKPERDGLFCARIFGPIKDYECLCGKYKRMKYKGVICEKCGVEVTLSRVRRERMGHIELAAPVAHIWFLKSLPSRIGTLLDMTLKDIERVLYFENYIVTEPGLTALKQNQLLSEEEYMMAVDEYGEDSFTAMIGAEAIHHLLASMELEKIAGDLRSELASTTSDLKQKKLLKRLKVVENFLESGNKPEWMVMKIIPVIPPDLRPLVPLDGGRFATSDLNDLYRRVINRNNRLKRLIELKAPGIIIRNEKRMLQEAVDALFDNGRRGRVITGANKRPLKSLSDMLKGKQGRFRQNLLGKRVDYSGRSVIVTGPELKLHQCGLPKKMALELFKPFIYARLDAKGYSSTVKQAKKLVEKEKPEVWDILDEVIREHPVLLNRAPTLHRLGIQAFEPILIEGKAIQLHPLVCTAFNADFDGDQMAVHVPLSLEAQLEARVLMMSTNNILHPASGAPIIVPSQDMVLGLYYLSIMNQNEPGEGMVFADMGELQHALETKVVTLHSKIKGRYKTVDENGNPVSMIYETTPGRMIIGELLPKNHNVPFDICNQELTKKNISKMIDTVYRHCGQKETVIFCDRIMALGFSHACKAGISFGKDDMVIPETKAKLIAETEALAKEYEQQYNDGLITQGEKYNKVVDAWAKCSERVADEMMKRIKAIEFDDSGRQKQMNSIYMMSHSGARGSPAQMRQLAGMRGLMARPDGSIIETPIISNFKEGLTVMEYFNSTHGARKGLADTALKTANSGYLTRRLVDVAQDCIVVTPDCGTDKGLTMQPIVDAGQVVASIGQRVLGRTALDDVVNPATGEVIVQAGRLIDERDVEAIEAAGIQTVRIRSALTCEVRTGVCAVCYGRDLARGTPVNIGEAVGVIAAQSIGEPGTQLTMRTFHMGGTAQVVDQSFLEASFEGTVKIRNRNVVRNSDGHLVVMGRNMAVLILDEAGAERASHKVTYGSRIFVDDGDKVKRGQRIAEWDPYTRPMLTEVEGTVAFEDLVDGISVQETTDESTGITKREVIDWRSTPRGSDLKPAITILDSKGKVAKLARGGDARFLLSVETVLSVDSGAKVRPGDVVARIPTESARTKDITGGLPRVAELFEARRPKDHAIIAEIDGTVRFGRDYKNKRRIIIEPHDSTLEPVEYLIPKGKPFHLQDGDVIEKGDFILDGNPAPHDILAIKGVEALASYLVNEIQEVYRLQGVLINDKHIEVIVRQMLQKVEITAQGDSTYIPGDHVDQVEFDEVNDRLVEEGKKPAEGQPVLLGITKASLQTPSFISAASFQETTRVLTEAAVAGKIDTLQGLKENVIVGRLIPAGTGGAMAQIRRIARSRDDLILDERRKESGVEMANPAIADMAGQPAE</sequence>
<gene>
    <name evidence="1" type="primary">rpoC</name>
    <name type="ordered locus">Meso_1818</name>
</gene>
<proteinExistence type="inferred from homology"/>
<comment type="function">
    <text evidence="1">DNA-dependent RNA polymerase catalyzes the transcription of DNA into RNA using the four ribonucleoside triphosphates as substrates.</text>
</comment>
<comment type="catalytic activity">
    <reaction evidence="1">
        <text>RNA(n) + a ribonucleoside 5'-triphosphate = RNA(n+1) + diphosphate</text>
        <dbReference type="Rhea" id="RHEA:21248"/>
        <dbReference type="Rhea" id="RHEA-COMP:14527"/>
        <dbReference type="Rhea" id="RHEA-COMP:17342"/>
        <dbReference type="ChEBI" id="CHEBI:33019"/>
        <dbReference type="ChEBI" id="CHEBI:61557"/>
        <dbReference type="ChEBI" id="CHEBI:140395"/>
        <dbReference type="EC" id="2.7.7.6"/>
    </reaction>
</comment>
<comment type="cofactor">
    <cofactor evidence="1">
        <name>Mg(2+)</name>
        <dbReference type="ChEBI" id="CHEBI:18420"/>
    </cofactor>
    <text evidence="1">Binds 1 Mg(2+) ion per subunit.</text>
</comment>
<comment type="cofactor">
    <cofactor evidence="1">
        <name>Zn(2+)</name>
        <dbReference type="ChEBI" id="CHEBI:29105"/>
    </cofactor>
    <text evidence="1">Binds 2 Zn(2+) ions per subunit.</text>
</comment>
<comment type="subunit">
    <text evidence="1">The RNAP catalytic core consists of 2 alpha, 1 beta, 1 beta' and 1 omega subunit. When a sigma factor is associated with the core the holoenzyme is formed, which can initiate transcription.</text>
</comment>
<comment type="similarity">
    <text evidence="1">Belongs to the RNA polymerase beta' chain family.</text>
</comment>
<feature type="chain" id="PRO_0000353391" description="DNA-directed RNA polymerase subunit beta'">
    <location>
        <begin position="1"/>
        <end position="1399"/>
    </location>
</feature>
<feature type="binding site" evidence="1">
    <location>
        <position position="71"/>
    </location>
    <ligand>
        <name>Zn(2+)</name>
        <dbReference type="ChEBI" id="CHEBI:29105"/>
        <label>1</label>
    </ligand>
</feature>
<feature type="binding site" evidence="1">
    <location>
        <position position="73"/>
    </location>
    <ligand>
        <name>Zn(2+)</name>
        <dbReference type="ChEBI" id="CHEBI:29105"/>
        <label>1</label>
    </ligand>
</feature>
<feature type="binding site" evidence="1">
    <location>
        <position position="86"/>
    </location>
    <ligand>
        <name>Zn(2+)</name>
        <dbReference type="ChEBI" id="CHEBI:29105"/>
        <label>1</label>
    </ligand>
</feature>
<feature type="binding site" evidence="1">
    <location>
        <position position="89"/>
    </location>
    <ligand>
        <name>Zn(2+)</name>
        <dbReference type="ChEBI" id="CHEBI:29105"/>
        <label>1</label>
    </ligand>
</feature>
<feature type="binding site" evidence="1">
    <location>
        <position position="462"/>
    </location>
    <ligand>
        <name>Mg(2+)</name>
        <dbReference type="ChEBI" id="CHEBI:18420"/>
    </ligand>
</feature>
<feature type="binding site" evidence="1">
    <location>
        <position position="464"/>
    </location>
    <ligand>
        <name>Mg(2+)</name>
        <dbReference type="ChEBI" id="CHEBI:18420"/>
    </ligand>
</feature>
<feature type="binding site" evidence="1">
    <location>
        <position position="466"/>
    </location>
    <ligand>
        <name>Mg(2+)</name>
        <dbReference type="ChEBI" id="CHEBI:18420"/>
    </ligand>
</feature>
<feature type="binding site" evidence="1">
    <location>
        <position position="810"/>
    </location>
    <ligand>
        <name>Zn(2+)</name>
        <dbReference type="ChEBI" id="CHEBI:29105"/>
        <label>2</label>
    </ligand>
</feature>
<feature type="binding site" evidence="1">
    <location>
        <position position="884"/>
    </location>
    <ligand>
        <name>Zn(2+)</name>
        <dbReference type="ChEBI" id="CHEBI:29105"/>
        <label>2</label>
    </ligand>
</feature>
<feature type="binding site" evidence="1">
    <location>
        <position position="891"/>
    </location>
    <ligand>
        <name>Zn(2+)</name>
        <dbReference type="ChEBI" id="CHEBI:29105"/>
        <label>2</label>
    </ligand>
</feature>
<feature type="binding site" evidence="1">
    <location>
        <position position="894"/>
    </location>
    <ligand>
        <name>Zn(2+)</name>
        <dbReference type="ChEBI" id="CHEBI:29105"/>
        <label>2</label>
    </ligand>
</feature>
<reference key="1">
    <citation type="submission" date="2006-06" db="EMBL/GenBank/DDBJ databases">
        <title>Complete sequence of chromosome of Mesorhizobium sp. BNC1.</title>
        <authorList>
            <consortium name="US DOE Joint Genome Institute"/>
            <person name="Copeland A."/>
            <person name="Lucas S."/>
            <person name="Lapidus A."/>
            <person name="Barry K."/>
            <person name="Detter J.C."/>
            <person name="Glavina del Rio T."/>
            <person name="Hammon N."/>
            <person name="Israni S."/>
            <person name="Dalin E."/>
            <person name="Tice H."/>
            <person name="Pitluck S."/>
            <person name="Chertkov O."/>
            <person name="Brettin T."/>
            <person name="Bruce D."/>
            <person name="Han C."/>
            <person name="Tapia R."/>
            <person name="Gilna P."/>
            <person name="Schmutz J."/>
            <person name="Larimer F."/>
            <person name="Land M."/>
            <person name="Hauser L."/>
            <person name="Kyrpides N."/>
            <person name="Mikhailova N."/>
            <person name="Richardson P."/>
        </authorList>
    </citation>
    <scope>NUCLEOTIDE SEQUENCE [LARGE SCALE GENOMIC DNA]</scope>
    <source>
        <strain>BNC1</strain>
    </source>
</reference>